<gene>
    <name type="primary">PAL</name>
</gene>
<sequence>MESMDKGTDSYGVTTGFGATSHRRTKQGGALHKELIRFLNAGIFGTNGESGHTLAPSATRAAMLVRINTLLQGYSGIRFEILEAITSLLNHSITPCLPLRGTITASGDLVPLSYIAGMLTGRPNSKGDWPDGKEIDAGEAFRLAGIPSGFFELQPKEGLALVNGTAVGSGLASMVLFEANVLSVLSEVISAIFCEVMQGKPEFTDHLTHKLKHHPGQIEAAAIMEHILDGSSYMKVAKKLHELDPLQKPKQDPYAALRTSPQWLGPQIEVIRNATLSIEREINSVNDNPLIDVSRNKALHGRNFQGTPIGVSMDNTRLAIAAIGKLMFAQFSELVNDFYNNGLPSNLSGGRNPSLDYGFKGAEIAMAAYCSELQFLANPVTNHVQSAEQHNQDVNSLGLISSRKTAEAVEILKLMSSTFLVGLCQAIDLRHLEENLKSTVKNTVSQVAKRVLTIGVNGELHPSRFCEKDLIKVVDGEHLFAYIDDPCSCTYPLMQKLRQVLVEHALINGEKEKDSSTSIFQKIGAFEEELKTHLPKEVESARIELERGNSAIPNRIKECRSYPLYKFVREELKTSLLTGEKVRSPGEEFDKVFSAICQGKVIDPLLECLREWNGAPIPIC</sequence>
<dbReference type="EC" id="4.3.1.24" evidence="2"/>
<dbReference type="EMBL" id="U16130">
    <property type="protein sequence ID" value="AAA51873.1"/>
    <property type="molecule type" value="mRNA"/>
</dbReference>
<dbReference type="SMR" id="P45727"/>
<dbReference type="UniPathway" id="UPA00713">
    <property type="reaction ID" value="UER00725"/>
</dbReference>
<dbReference type="GO" id="GO:0005737">
    <property type="term" value="C:cytoplasm"/>
    <property type="evidence" value="ECO:0007669"/>
    <property type="project" value="UniProtKB-SubCell"/>
</dbReference>
<dbReference type="GO" id="GO:0045548">
    <property type="term" value="F:phenylalanine ammonia-lyase activity"/>
    <property type="evidence" value="ECO:0007669"/>
    <property type="project" value="UniProtKB-EC"/>
</dbReference>
<dbReference type="GO" id="GO:0009800">
    <property type="term" value="P:cinnamic acid biosynthetic process"/>
    <property type="evidence" value="ECO:0007669"/>
    <property type="project" value="UniProtKB-UniPathway"/>
</dbReference>
<dbReference type="GO" id="GO:0006559">
    <property type="term" value="P:L-phenylalanine catabolic process"/>
    <property type="evidence" value="ECO:0007669"/>
    <property type="project" value="UniProtKB-KW"/>
</dbReference>
<dbReference type="CDD" id="cd00332">
    <property type="entry name" value="PAL-HAL"/>
    <property type="match status" value="1"/>
</dbReference>
<dbReference type="FunFam" id="1.10.274.20:FF:000001">
    <property type="entry name" value="Phenylalanine ammonia-lyase"/>
    <property type="match status" value="1"/>
</dbReference>
<dbReference type="FunFam" id="1.20.200.10:FF:000009">
    <property type="entry name" value="Phenylalanine ammonia-lyase"/>
    <property type="match status" value="1"/>
</dbReference>
<dbReference type="Gene3D" id="1.20.200.10">
    <property type="entry name" value="Fumarase/aspartase (Central domain)"/>
    <property type="match status" value="1"/>
</dbReference>
<dbReference type="Gene3D" id="1.10.275.10">
    <property type="entry name" value="Fumarase/aspartase (N-terminal domain)"/>
    <property type="match status" value="1"/>
</dbReference>
<dbReference type="Gene3D" id="1.10.274.20">
    <property type="entry name" value="Phenylalanine ammonia-lyase 1, domain 3"/>
    <property type="match status" value="1"/>
</dbReference>
<dbReference type="InterPro" id="IPR001106">
    <property type="entry name" value="Aromatic_Lyase"/>
</dbReference>
<dbReference type="InterPro" id="IPR024083">
    <property type="entry name" value="Fumarase/histidase_N"/>
</dbReference>
<dbReference type="InterPro" id="IPR008948">
    <property type="entry name" value="L-Aspartase-like"/>
</dbReference>
<dbReference type="InterPro" id="IPR022313">
    <property type="entry name" value="Phe/His_NH3-lyase_AS"/>
</dbReference>
<dbReference type="InterPro" id="IPR005922">
    <property type="entry name" value="Phe_NH3-lyase"/>
</dbReference>
<dbReference type="InterPro" id="IPR023144">
    <property type="entry name" value="Phe_NH3-lyase_shielding_dom_sf"/>
</dbReference>
<dbReference type="NCBIfam" id="TIGR01226">
    <property type="entry name" value="phe_am_lyase"/>
    <property type="match status" value="1"/>
</dbReference>
<dbReference type="PANTHER" id="PTHR10362">
    <property type="entry name" value="HISTIDINE AMMONIA-LYASE"/>
    <property type="match status" value="1"/>
</dbReference>
<dbReference type="Pfam" id="PF00221">
    <property type="entry name" value="Lyase_aromatic"/>
    <property type="match status" value="1"/>
</dbReference>
<dbReference type="SUPFAM" id="SSF48557">
    <property type="entry name" value="L-aspartase-like"/>
    <property type="match status" value="1"/>
</dbReference>
<dbReference type="PROSITE" id="PS00488">
    <property type="entry name" value="PAL_HISTIDASE"/>
    <property type="match status" value="1"/>
</dbReference>
<evidence type="ECO:0000250" key="1">
    <source>
        <dbReference type="UniProtKB" id="P11544"/>
    </source>
</evidence>
<evidence type="ECO:0000250" key="2">
    <source>
        <dbReference type="UniProtKB" id="P24481"/>
    </source>
</evidence>
<evidence type="ECO:0000250" key="3">
    <source>
        <dbReference type="UniProtKB" id="Q68G84"/>
    </source>
</evidence>
<evidence type="ECO:0000255" key="4">
    <source>
        <dbReference type="PROSITE-ProRule" id="PRU10122"/>
    </source>
</evidence>
<evidence type="ECO:0000305" key="5"/>
<accession>P45727</accession>
<protein>
    <recommendedName>
        <fullName>Phenylalanine ammonia-lyase</fullName>
        <ecNumber evidence="2">4.3.1.24</ecNumber>
    </recommendedName>
</protein>
<proteinExistence type="evidence at transcript level"/>
<organism>
    <name type="scientific">Persea americana</name>
    <name type="common">Avocado</name>
    <dbReference type="NCBI Taxonomy" id="3435"/>
    <lineage>
        <taxon>Eukaryota</taxon>
        <taxon>Viridiplantae</taxon>
        <taxon>Streptophyta</taxon>
        <taxon>Embryophyta</taxon>
        <taxon>Tracheophyta</taxon>
        <taxon>Spermatophyta</taxon>
        <taxon>Magnoliopsida</taxon>
        <taxon>Magnoliidae</taxon>
        <taxon>Laurales</taxon>
        <taxon>Lauraceae</taxon>
        <taxon>Persea</taxon>
    </lineage>
</organism>
<keyword id="KW-0963">Cytoplasm</keyword>
<keyword id="KW-0456">Lyase</keyword>
<keyword id="KW-0585">Phenylalanine catabolism</keyword>
<keyword id="KW-0587">Phenylpropanoid metabolism</keyword>
<name>PALY_PERAE</name>
<reference key="1">
    <citation type="submission" date="1994-10" db="EMBL/GenBank/DDBJ databases">
        <authorList>
            <person name="Prusky D."/>
        </authorList>
    </citation>
    <scope>NUCLEOTIDE SEQUENCE [MRNA]</scope>
    <source>
        <strain>cv. Hass</strain>
    </source>
</reference>
<comment type="function">
    <text evidence="2">This is a key enzyme of plant metabolism catalyzing the first reaction in the biosynthesis from L-phenylalanine of a wide variety of natural products based on the phenylpropane skeleton.</text>
</comment>
<comment type="catalytic activity">
    <reaction evidence="2">
        <text>L-phenylalanine = (E)-cinnamate + NH4(+)</text>
        <dbReference type="Rhea" id="RHEA:21384"/>
        <dbReference type="ChEBI" id="CHEBI:15669"/>
        <dbReference type="ChEBI" id="CHEBI:28938"/>
        <dbReference type="ChEBI" id="CHEBI:58095"/>
        <dbReference type="EC" id="4.3.1.24"/>
    </reaction>
</comment>
<comment type="pathway">
    <text evidence="5">Phenylpropanoid metabolism; trans-cinnamate biosynthesis; trans-cinnamate from L-phenylalanine: step 1/1.</text>
</comment>
<comment type="subunit">
    <text evidence="2">Homotetramer.</text>
</comment>
<comment type="subcellular location">
    <subcellularLocation>
        <location evidence="5">Cytoplasm</location>
    </subcellularLocation>
</comment>
<comment type="PTM">
    <text evidence="3">Contains an active site 4-methylidene-imidazol-5-one (MIO), which is formed autocatalytically by cyclization and dehydration of residues Ala-Ser-Gly.</text>
</comment>
<comment type="similarity">
    <text evidence="5">Belongs to the PAL/histidase family.</text>
</comment>
<feature type="chain" id="PRO_0000215405" description="Phenylalanine ammonia-lyase">
    <location>
        <begin position="1"/>
        <end position="620"/>
    </location>
</feature>
<feature type="active site" description="Proton donor/acceptor" evidence="3">
    <location>
        <position position="11"/>
    </location>
</feature>
<feature type="binding site" evidence="3">
    <location>
        <position position="163"/>
    </location>
    <ligand>
        <name>(E)-cinnamate</name>
        <dbReference type="ChEBI" id="CHEBI:15669"/>
    </ligand>
</feature>
<feature type="binding site" evidence="3">
    <location>
        <position position="251"/>
    </location>
    <ligand>
        <name>(E)-cinnamate</name>
        <dbReference type="ChEBI" id="CHEBI:15669"/>
    </ligand>
</feature>
<feature type="binding site" evidence="3">
    <location>
        <position position="258"/>
    </location>
    <ligand>
        <name>(E)-cinnamate</name>
        <dbReference type="ChEBI" id="CHEBI:15669"/>
    </ligand>
</feature>
<feature type="binding site" evidence="3">
    <location>
        <position position="288"/>
    </location>
    <ligand>
        <name>(E)-cinnamate</name>
        <dbReference type="ChEBI" id="CHEBI:15669"/>
    </ligand>
</feature>
<feature type="binding site" evidence="1">
    <location>
        <position position="360"/>
    </location>
    <ligand>
        <name>(E)-cinnamate</name>
        <dbReference type="ChEBI" id="CHEBI:15669"/>
    </ligand>
</feature>
<feature type="binding site" evidence="1">
    <location>
        <position position="388"/>
    </location>
    <ligand>
        <name>(E)-cinnamate</name>
        <dbReference type="ChEBI" id="CHEBI:15669"/>
    </ligand>
</feature>
<feature type="binding site" evidence="3">
    <location>
        <position position="391"/>
    </location>
    <ligand>
        <name>(E)-cinnamate</name>
        <dbReference type="ChEBI" id="CHEBI:15669"/>
    </ligand>
</feature>
<feature type="modified residue" description="2,3-didehydroalanine (Ser)" evidence="4">
    <location>
        <position position="106"/>
    </location>
</feature>
<feature type="cross-link" description="5-imidazolinone (Ala-Gly)" evidence="3">
    <location>
        <begin position="105"/>
        <end position="107"/>
    </location>
</feature>